<feature type="chain" id="PRO_0000350870" description="Scarecrow-like protein 33">
    <location>
        <begin position="1"/>
        <end position="694"/>
    </location>
</feature>
<feature type="domain" description="GRAS" evidence="2">
    <location>
        <begin position="309"/>
        <end position="692"/>
    </location>
</feature>
<feature type="region of interest" description="Disordered" evidence="3">
    <location>
        <begin position="289"/>
        <end position="313"/>
    </location>
</feature>
<feature type="region of interest" description="Leucine repeat I (LRI)" evidence="2">
    <location>
        <begin position="316"/>
        <end position="376"/>
    </location>
</feature>
<feature type="region of interest" description="VHIID" evidence="2">
    <location>
        <begin position="395"/>
        <end position="462"/>
    </location>
</feature>
<feature type="region of interest" description="Leucine repeat II (LRII)" evidence="2">
    <location>
        <begin position="478"/>
        <end position="510"/>
    </location>
</feature>
<feature type="region of interest" description="PFYRE" evidence="2">
    <location>
        <begin position="519"/>
        <end position="613"/>
    </location>
</feature>
<feature type="region of interest" description="SAW" evidence="2">
    <location>
        <begin position="616"/>
        <end position="692"/>
    </location>
</feature>
<feature type="short sequence motif" description="VHIID" evidence="2">
    <location>
        <begin position="428"/>
        <end position="432"/>
    </location>
</feature>
<gene>
    <name type="primary">SCL33</name>
    <name type="ordered locus">At2g29060</name>
    <name type="ORF">T9I4.14</name>
</gene>
<accession>P0C883</accession>
<accession>O81074</accession>
<evidence type="ECO:0000250" key="1"/>
<evidence type="ECO:0000255" key="2">
    <source>
        <dbReference type="PROSITE-ProRule" id="PRU01191"/>
    </source>
</evidence>
<evidence type="ECO:0000256" key="3">
    <source>
        <dbReference type="SAM" id="MobiDB-lite"/>
    </source>
</evidence>
<evidence type="ECO:0000269" key="4">
    <source>
    </source>
</evidence>
<evidence type="ECO:0000305" key="5"/>
<keyword id="KW-0539">Nucleus</keyword>
<keyword id="KW-1185">Reference proteome</keyword>
<keyword id="KW-0804">Transcription</keyword>
<keyword id="KW-0805">Transcription regulation</keyword>
<organism>
    <name type="scientific">Arabidopsis thaliana</name>
    <name type="common">Mouse-ear cress</name>
    <dbReference type="NCBI Taxonomy" id="3702"/>
    <lineage>
        <taxon>Eukaryota</taxon>
        <taxon>Viridiplantae</taxon>
        <taxon>Streptophyta</taxon>
        <taxon>Embryophyta</taxon>
        <taxon>Tracheophyta</taxon>
        <taxon>Spermatophyta</taxon>
        <taxon>Magnoliopsida</taxon>
        <taxon>eudicotyledons</taxon>
        <taxon>Gunneridae</taxon>
        <taxon>Pentapetalae</taxon>
        <taxon>rosids</taxon>
        <taxon>malvids</taxon>
        <taxon>Brassicales</taxon>
        <taxon>Brassicaceae</taxon>
        <taxon>Camelineae</taxon>
        <taxon>Arabidopsis</taxon>
    </lineage>
</organism>
<comment type="function">
    <text evidence="1">Probable transcription factor involved in plant development.</text>
</comment>
<comment type="subunit">
    <text evidence="4">Interacts with SNRNP35.</text>
</comment>
<comment type="subcellular location">
    <subcellularLocation>
        <location evidence="5">Nucleus</location>
    </subcellularLocation>
</comment>
<comment type="similarity">
    <text evidence="5">Belongs to the GRAS family.</text>
</comment>
<comment type="sequence caution" evidence="5">
    <conflict type="erroneous gene model prediction">
        <sequence resource="EMBL-CDS" id="AAC33232"/>
    </conflict>
    <text>The predicted gene At2g29060 has been split into 2 genes: At2g29060 and At2g29065.</text>
</comment>
<sequence>MGSYSAGFPGSLDWFDFPGLGNGSYLNDQPLLDIGSVPPPLDPYPQQNLASADADFSDSVLKYISQVLMEEDMEDKPCMFHDALSLQAAEKSLYEALGEKYPVDDSDQPLTTTTSLAQLVSSPGGSSYASSTTTTSSDSQWSFDCLENNRPSSWLQTPIPSNFIFQSTSTRASSGNAVFGSSFSGDLVSNMFNDTDLALQFKKGMEEASKFLPKSSQLVIDNSVPNRLTGKKSHWREEEHLTEERSKKQSAIYVDETDELTDMFDNILIFGEAKEQPVCILNESFPKEPAKASTFSKSPKGEKPEASGNSYTKETPDLRTMLVSCAQAVSINDRRTADELLSRIRQHSSSYGDGTERLAHYFANSLEARLAGIGTQVYTALSSKKTSTSDMLKAYQTYISVCPFKKIAIIFANHSIMRLASSANAKTIHIIDFGISDGFQWPSLIHRLAWRRGSSCKLRITGIELPQRGFRPAEGVIETGRRLAKYCQKFNIPFEYNAIAQKWESIKLEDLKLKEGEFVAVNSLFRFRNLLDETVAVHSPRDTVLKLIRKIKPDVFIPGILSGSYNAPFFVTRFREVLFHYSSLFDMCDTNLTREDPMRVMFEKEFYGREIMNVVACEGTERVERPESYKQWQARAMRAGFRQIPLEKELVQKLKLMVESGYKPKEFDVDQDCHWLLQGWKGRIVYGSSIWVPL</sequence>
<reference key="1">
    <citation type="journal article" date="1999" name="Nature">
        <title>Sequence and analysis of chromosome 2 of the plant Arabidopsis thaliana.</title>
        <authorList>
            <person name="Lin X."/>
            <person name="Kaul S."/>
            <person name="Rounsley S.D."/>
            <person name="Shea T.P."/>
            <person name="Benito M.-I."/>
            <person name="Town C.D."/>
            <person name="Fujii C.Y."/>
            <person name="Mason T.M."/>
            <person name="Bowman C.L."/>
            <person name="Barnstead M.E."/>
            <person name="Feldblyum T.V."/>
            <person name="Buell C.R."/>
            <person name="Ketchum K.A."/>
            <person name="Lee J.J."/>
            <person name="Ronning C.M."/>
            <person name="Koo H.L."/>
            <person name="Moffat K.S."/>
            <person name="Cronin L.A."/>
            <person name="Shen M."/>
            <person name="Pai G."/>
            <person name="Van Aken S."/>
            <person name="Umayam L."/>
            <person name="Tallon L.J."/>
            <person name="Gill J.E."/>
            <person name="Adams M.D."/>
            <person name="Carrera A.J."/>
            <person name="Creasy T.H."/>
            <person name="Goodman H.M."/>
            <person name="Somerville C.R."/>
            <person name="Copenhaver G.P."/>
            <person name="Preuss D."/>
            <person name="Nierman W.C."/>
            <person name="White O."/>
            <person name="Eisen J.A."/>
            <person name="Salzberg S.L."/>
            <person name="Fraser C.M."/>
            <person name="Venter J.C."/>
        </authorList>
    </citation>
    <scope>NUCLEOTIDE SEQUENCE [LARGE SCALE GENOMIC DNA]</scope>
    <source>
        <strain>cv. Columbia</strain>
    </source>
</reference>
<reference key="2">
    <citation type="journal article" date="2017" name="Plant J.">
        <title>Araport11: a complete reannotation of the Arabidopsis thaliana reference genome.</title>
        <authorList>
            <person name="Cheng C.Y."/>
            <person name="Krishnakumar V."/>
            <person name="Chan A.P."/>
            <person name="Thibaud-Nissen F."/>
            <person name="Schobel S."/>
            <person name="Town C.D."/>
        </authorList>
    </citation>
    <scope>GENOME REANNOTATION</scope>
    <source>
        <strain>cv. Columbia</strain>
    </source>
</reference>
<reference key="3">
    <citation type="journal article" date="2004" name="Plant Mol. Biol.">
        <title>Genome-wide analysis of the GRAS gene family in rice and Arabidopsis.</title>
        <authorList>
            <person name="Tian C."/>
            <person name="Wan P."/>
            <person name="Sun S."/>
            <person name="Li J."/>
            <person name="Chen M."/>
        </authorList>
    </citation>
    <scope>GENE FAMILY</scope>
</reference>
<reference key="4">
    <citation type="journal article" date="2005" name="RNA">
        <title>Evolutionary conservation of minor U12-type spliceosome between plants and humans.</title>
        <authorList>
            <person name="Lorkovic Z.J."/>
            <person name="Lehner R."/>
            <person name="Forstner C."/>
            <person name="Barta A."/>
        </authorList>
    </citation>
    <scope>INTERACTION WITH SNRNP35</scope>
</reference>
<reference key="5">
    <citation type="journal article" date="2008" name="Plant Mol. Biol.">
        <title>Large-scale analysis of the GRAS gene family in Arabidopsis thaliana.</title>
        <authorList>
            <person name="Lee M.-H."/>
            <person name="Kim B."/>
            <person name="Song S.-K."/>
            <person name="Heo J.-O."/>
            <person name="Yu N.-I."/>
            <person name="Lee S.A."/>
            <person name="Kim M."/>
            <person name="Kim D.G."/>
            <person name="Sohn S.O."/>
            <person name="Lim C.E."/>
            <person name="Chang K.S."/>
            <person name="Lee M.M."/>
            <person name="Lim J."/>
        </authorList>
    </citation>
    <scope>GENE FAMILY</scope>
</reference>
<protein>
    <recommendedName>
        <fullName>Scarecrow-like protein 33</fullName>
        <shortName>AtSCL33</shortName>
    </recommendedName>
    <alternativeName>
        <fullName>GRAS family protein 12</fullName>
        <shortName>AtGRAS-12</shortName>
    </alternativeName>
</protein>
<dbReference type="EMBL" id="AC005315">
    <property type="protein sequence ID" value="AAC33232.1"/>
    <property type="status" value="ALT_SEQ"/>
    <property type="molecule type" value="Genomic_DNA"/>
</dbReference>
<dbReference type="EMBL" id="CP002685">
    <property type="protein sequence ID" value="AEC08204.1"/>
    <property type="molecule type" value="Genomic_DNA"/>
</dbReference>
<dbReference type="PIR" id="T02736">
    <property type="entry name" value="T02736"/>
</dbReference>
<dbReference type="RefSeq" id="NP_180470.2">
    <property type="nucleotide sequence ID" value="NM_128463.5"/>
</dbReference>
<dbReference type="SMR" id="P0C883"/>
<dbReference type="FunCoup" id="P0C883">
    <property type="interactions" value="33"/>
</dbReference>
<dbReference type="STRING" id="3702.P0C883"/>
<dbReference type="iPTMnet" id="P0C883"/>
<dbReference type="PaxDb" id="3702-AT2G29060.1"/>
<dbReference type="ProteomicsDB" id="232810"/>
<dbReference type="EnsemblPlants" id="AT2G29060.1">
    <property type="protein sequence ID" value="AT2G29060.1"/>
    <property type="gene ID" value="AT2G29060"/>
</dbReference>
<dbReference type="GeneID" id="817454"/>
<dbReference type="Gramene" id="AT2G29060.1">
    <property type="protein sequence ID" value="AT2G29060.1"/>
    <property type="gene ID" value="AT2G29060"/>
</dbReference>
<dbReference type="KEGG" id="ath:AT2G29060"/>
<dbReference type="Araport" id="AT2G29060"/>
<dbReference type="TAIR" id="AT2G29060"/>
<dbReference type="eggNOG" id="ENOG502QSQ6">
    <property type="taxonomic scope" value="Eukaryota"/>
</dbReference>
<dbReference type="HOGENOM" id="CLU_011924_2_2_1"/>
<dbReference type="InParanoid" id="P0C883"/>
<dbReference type="PhylomeDB" id="P0C883"/>
<dbReference type="PRO" id="PR:P0C883"/>
<dbReference type="Proteomes" id="UP000006548">
    <property type="component" value="Chromosome 2"/>
</dbReference>
<dbReference type="ExpressionAtlas" id="P0C883">
    <property type="expression patterns" value="baseline and differential"/>
</dbReference>
<dbReference type="GO" id="GO:0005634">
    <property type="term" value="C:nucleus"/>
    <property type="evidence" value="ECO:0007669"/>
    <property type="project" value="UniProtKB-SubCell"/>
</dbReference>
<dbReference type="GO" id="GO:0003700">
    <property type="term" value="F:DNA-binding transcription factor activity"/>
    <property type="evidence" value="ECO:0000250"/>
    <property type="project" value="TAIR"/>
</dbReference>
<dbReference type="GO" id="GO:0006355">
    <property type="term" value="P:regulation of DNA-templated transcription"/>
    <property type="evidence" value="ECO:0000304"/>
    <property type="project" value="TAIR"/>
</dbReference>
<dbReference type="InterPro" id="IPR005202">
    <property type="entry name" value="TF_GRAS"/>
</dbReference>
<dbReference type="PANTHER" id="PTHR31636">
    <property type="entry name" value="OSJNBA0084A10.13 PROTEIN-RELATED"/>
    <property type="match status" value="1"/>
</dbReference>
<dbReference type="Pfam" id="PF03514">
    <property type="entry name" value="GRAS"/>
    <property type="match status" value="1"/>
</dbReference>
<dbReference type="PROSITE" id="PS50985">
    <property type="entry name" value="GRAS"/>
    <property type="match status" value="1"/>
</dbReference>
<name>SCL33_ARATH</name>
<proteinExistence type="evidence at protein level"/>